<reference key="1">
    <citation type="journal article" date="2019" name="Molecules">
        <title>Heterologous expression of ilicicolin H biosynthetic gene cluster and production of a new potent antifungal reagent, ilicicolin J.</title>
        <authorList>
            <person name="Lin X."/>
            <person name="Yuan S."/>
            <person name="Chen S."/>
            <person name="Chen B."/>
            <person name="Xu H."/>
            <person name="Liu L."/>
            <person name="Li H."/>
            <person name="Gao Z."/>
        </authorList>
    </citation>
    <scope>NUCLEOTIDE SEQUENCE [LARGE SCALE GENOMIC DNA]</scope>
    <scope>FUNCTION</scope>
    <scope>CATALYTIC ACTIVITY</scope>
    <scope>PATHWAY</scope>
</reference>
<protein>
    <recommendedName>
        <fullName evidence="4">Trans-enoyl reductase iliB</fullName>
        <ecNumber evidence="3">1.-.-.-</ecNumber>
    </recommendedName>
    <alternativeName>
        <fullName evidence="4">Ilicicolin H biosynthesis cluster protein B</fullName>
    </alternativeName>
</protein>
<name>ILIB_NEOS2</name>
<evidence type="ECO:0000250" key="1">
    <source>
        <dbReference type="UniProtKB" id="Q9Y7D0"/>
    </source>
</evidence>
<evidence type="ECO:0000255" key="2"/>
<evidence type="ECO:0000269" key="3">
    <source>
    </source>
</evidence>
<evidence type="ECO:0000303" key="4">
    <source>
    </source>
</evidence>
<evidence type="ECO:0000305" key="5"/>
<evidence type="ECO:0000305" key="6">
    <source>
    </source>
</evidence>
<accession>P0DO31</accession>
<organism>
    <name type="scientific">Neonectria sp. (strain DH2)</name>
    <dbReference type="NCBI Taxonomy" id="1735992"/>
    <lineage>
        <taxon>Eukaryota</taxon>
        <taxon>Fungi</taxon>
        <taxon>Dikarya</taxon>
        <taxon>Ascomycota</taxon>
        <taxon>Pezizomycotina</taxon>
        <taxon>Sordariomycetes</taxon>
        <taxon>Hypocreomycetidae</taxon>
        <taxon>Hypocreales</taxon>
        <taxon>Nectriaceae</taxon>
        <taxon>Neonectria</taxon>
    </lineage>
</organism>
<comment type="function">
    <text evidence="3 6">Trans-enoyl reductase; part of the gene cluster that mediates the biosynthesis of ilicicolin H, a 4-hydroxy-2-pyridonealkaloid that has potent and broad antifungal activities by inhibiting the mitochondrial respiration chain (PubMed:31216742). IliB collaborates with the hybrid PKS-NRPS synthetase iliA to assemble the backbone of ilicicolin H (PubMed:31216742). The PKS portion of iliA and trans-acting enoyl reductase iliB work together to construct an octaketide, and two methyl groups are introduced by the MT domain of iliA during the chain assembly (PubMed:31216742). The nascent chain is then condensed with tyrosine, catalyzed by the iliA C domain, and the resulting PKS-NRPS hybrid is offloaded by the iliA RED domain to form an advanced tetramic acid intermediate (PubMed:31216742). The biosynthesis of ilicicolin H starts with formation of the tetramic acid by the hybrid PKS-NRPS synthetase iliA with the partnering trans-enoyl reductase iliB since iliA lacks a designated enoylreductase (ER) domain. The cytochrome P450 monooxygenase iliC then catalyzes the ring expansion of the tetramate to the acyclic 2-pyridone. The pericyclase iliD further converts the acyclic 2-pyridone into 8-epi-ilicicolin H. 8-epi-ilicicolin H might then spontaneously convert to ilicicolin H since ilicicolin H is produced in the absence of the epimerase iliE, in contrast to what was observed for the Talaromyces variabilis ilicolin H biosynthetic pathway (Probable) (PubMed:31216742).</text>
</comment>
<comment type="catalytic activity">
    <reaction evidence="3">
        <text>N-[(4E,6E,10S,12Z,14E)-6,10-dimethyl-3-oxohexadeca-4,6,12,14-tetraenoyl]-L-tyrosyl-[ACP] = (3E,5S)-3-[(2E,4E,8S,10E,12Z)-1-hydroxy-4,8-dimethyltetradeca-2,4,10,12-tetraen-1-ylidene]-5-[(4-hydroxyphenyl)methyl]pyrrolidine-2,4-dione + holo-[ACP] + H(+)</text>
        <dbReference type="Rhea" id="RHEA:64548"/>
        <dbReference type="Rhea" id="RHEA-COMP:9685"/>
        <dbReference type="Rhea" id="RHEA-COMP:16623"/>
        <dbReference type="ChEBI" id="CHEBI:15378"/>
        <dbReference type="ChEBI" id="CHEBI:64479"/>
        <dbReference type="ChEBI" id="CHEBI:155890"/>
        <dbReference type="ChEBI" id="CHEBI:155893"/>
    </reaction>
    <physiologicalReaction direction="left-to-right" evidence="3">
        <dbReference type="Rhea" id="RHEA:64549"/>
    </physiologicalReaction>
</comment>
<comment type="pathway">
    <text evidence="3">Mycotoxin biosynthesis.</text>
</comment>
<comment type="subunit">
    <text evidence="1">Monomer.</text>
</comment>
<comment type="similarity">
    <text evidence="5">Belongs to the zinc-containing alcohol dehydrogenase family.</text>
</comment>
<sequence>MALATPLPATQAAVKVTGPSTVDVSAATTLPVLEAFEVLVRVACVSINHVDGKSADMSPTPGATSGVDFSGLIVALGSKVDSDEFRANNNMRALSIGDRVFGGVFGNNPLRHDNGAFAEYVAVPARLIWHMPAAMDFSTAATIGATLATVGLALFQYLQVPMPSTQTISDSKTIPDPQQKTRMALVYGGGTATGAMAIQVLKLAGFRPITTCSPGSAARAMHLGAAATFDYRSPTCGADLREHTANGLELALDCITDTASMSICYEALGSAGGRYVALDAFPLRGHTRRSVAAEWVCTYTQFGHAVAWVPPYNLDARPRDREIAEAWYVVAQQLVDEGLIEPYPKEDRTGGLAAVGEGMRAVWKGEISGRKLAYPIAEECY</sequence>
<feature type="chain" id="PRO_0000453068" description="Trans-enoyl reductase iliB">
    <location>
        <begin position="1"/>
        <end position="381"/>
    </location>
</feature>
<feature type="binding site" evidence="1">
    <location>
        <begin position="50"/>
        <end position="53"/>
    </location>
    <ligand>
        <name>NADP(+)</name>
        <dbReference type="ChEBI" id="CHEBI:58349"/>
    </ligand>
</feature>
<feature type="binding site" evidence="2">
    <location>
        <begin position="145"/>
        <end position="152"/>
    </location>
    <ligand>
        <name>substrate</name>
    </ligand>
</feature>
<feature type="binding site" evidence="1">
    <location>
        <begin position="213"/>
        <end position="216"/>
    </location>
    <ligand>
        <name>NADP(+)</name>
        <dbReference type="ChEBI" id="CHEBI:58349"/>
    </ligand>
</feature>
<feature type="binding site" evidence="1">
    <location>
        <position position="231"/>
    </location>
    <ligand>
        <name>NADP(+)</name>
        <dbReference type="ChEBI" id="CHEBI:58349"/>
    </ligand>
</feature>
<feature type="binding site" evidence="1">
    <location>
        <begin position="278"/>
        <end position="279"/>
    </location>
    <ligand>
        <name>NADP(+)</name>
        <dbReference type="ChEBI" id="CHEBI:58349"/>
    </ligand>
</feature>
<feature type="binding site" evidence="2">
    <location>
        <begin position="298"/>
        <end position="302"/>
    </location>
    <ligand>
        <name>substrate</name>
    </ligand>
</feature>
<feature type="binding site" evidence="1">
    <location>
        <begin position="367"/>
        <end position="368"/>
    </location>
    <ligand>
        <name>NADP(+)</name>
        <dbReference type="ChEBI" id="CHEBI:58349"/>
    </ligand>
</feature>
<gene>
    <name evidence="4" type="primary">iliB</name>
</gene>
<proteinExistence type="evidence at protein level"/>
<dbReference type="EC" id="1.-.-.-" evidence="3"/>
<dbReference type="SMR" id="P0DO31"/>
<dbReference type="GO" id="GO:0000166">
    <property type="term" value="F:nucleotide binding"/>
    <property type="evidence" value="ECO:0007669"/>
    <property type="project" value="UniProtKB-KW"/>
</dbReference>
<dbReference type="GO" id="GO:0016651">
    <property type="term" value="F:oxidoreductase activity, acting on NAD(P)H"/>
    <property type="evidence" value="ECO:0007669"/>
    <property type="project" value="InterPro"/>
</dbReference>
<dbReference type="GO" id="GO:0016218">
    <property type="term" value="F:polyketide synthase activity"/>
    <property type="evidence" value="ECO:0000314"/>
    <property type="project" value="UniProt"/>
</dbReference>
<dbReference type="GO" id="GO:0140781">
    <property type="term" value="P:ilicicolin H biosynthetic process"/>
    <property type="evidence" value="ECO:0000314"/>
    <property type="project" value="GO_Central"/>
</dbReference>
<dbReference type="CDD" id="cd08249">
    <property type="entry name" value="enoyl_reductase_like"/>
    <property type="match status" value="1"/>
</dbReference>
<dbReference type="Gene3D" id="3.90.180.10">
    <property type="entry name" value="Medium-chain alcohol dehydrogenases, catalytic domain"/>
    <property type="match status" value="1"/>
</dbReference>
<dbReference type="Gene3D" id="3.40.50.720">
    <property type="entry name" value="NAD(P)-binding Rossmann-like Domain"/>
    <property type="match status" value="1"/>
</dbReference>
<dbReference type="InterPro" id="IPR013149">
    <property type="entry name" value="ADH-like_C"/>
</dbReference>
<dbReference type="InterPro" id="IPR013154">
    <property type="entry name" value="ADH-like_N"/>
</dbReference>
<dbReference type="InterPro" id="IPR011032">
    <property type="entry name" value="GroES-like_sf"/>
</dbReference>
<dbReference type="InterPro" id="IPR036291">
    <property type="entry name" value="NAD(P)-bd_dom_sf"/>
</dbReference>
<dbReference type="InterPro" id="IPR020843">
    <property type="entry name" value="PKS_ER"/>
</dbReference>
<dbReference type="InterPro" id="IPR047122">
    <property type="entry name" value="Trans-enoyl_RdTase-like"/>
</dbReference>
<dbReference type="PANTHER" id="PTHR45348">
    <property type="entry name" value="HYPOTHETICAL OXIDOREDUCTASE (EUROFUNG)"/>
    <property type="match status" value="1"/>
</dbReference>
<dbReference type="PANTHER" id="PTHR45348:SF6">
    <property type="entry name" value="TRANS-ENOYL REDUCTASE APDC"/>
    <property type="match status" value="1"/>
</dbReference>
<dbReference type="Pfam" id="PF08240">
    <property type="entry name" value="ADH_N"/>
    <property type="match status" value="1"/>
</dbReference>
<dbReference type="Pfam" id="PF00107">
    <property type="entry name" value="ADH_zinc_N"/>
    <property type="match status" value="1"/>
</dbReference>
<dbReference type="SMART" id="SM00829">
    <property type="entry name" value="PKS_ER"/>
    <property type="match status" value="1"/>
</dbReference>
<dbReference type="SUPFAM" id="SSF50129">
    <property type="entry name" value="GroES-like"/>
    <property type="match status" value="1"/>
</dbReference>
<dbReference type="SUPFAM" id="SSF51735">
    <property type="entry name" value="NAD(P)-binding Rossmann-fold domains"/>
    <property type="match status" value="1"/>
</dbReference>
<keyword id="KW-0521">NADP</keyword>
<keyword id="KW-0547">Nucleotide-binding</keyword>
<keyword id="KW-0560">Oxidoreductase</keyword>